<reference key="1">
    <citation type="journal article" date="1966" name="Br. J. Pharmacol.">
        <title>Pharmacological data on phyllokinin (bradykinyl-isoleucyl-tyrosine O-sulphate) and bradykinyl-isoleucyl-tyrosine.</title>
        <authorList>
            <person name="Anastasi A."/>
            <person name="Bertaccini G."/>
            <person name="Erspamer V."/>
        </authorList>
    </citation>
    <scope>PROTEIN SEQUENCE</scope>
    <scope>SULFATION AT TYR-11</scope>
    <source>
        <tissue>Skin</tissue>
    </source>
</reference>
<feature type="peptide" id="PRO_0000043522" description="Phyllokinin">
    <location>
        <begin position="1"/>
        <end position="11"/>
    </location>
</feature>
<feature type="modified residue" description="Sulfotyrosine" evidence="2">
    <location>
        <position position="11"/>
    </location>
</feature>
<evidence type="ECO:0000250" key="1"/>
<evidence type="ECO:0000269" key="2">
    <source>
    </source>
</evidence>
<evidence type="ECO:0000305" key="3"/>
<protein>
    <recommendedName>
        <fullName>Phyllokinin</fullName>
    </recommendedName>
    <alternativeName>
        <fullName>Bradykinyl-isoleucyl-tyrosine O-sulfate</fullName>
    </alternativeName>
</protein>
<keyword id="KW-0878">Amphibian defense peptide</keyword>
<keyword id="KW-0903">Direct protein sequencing</keyword>
<keyword id="KW-1213">G-protein coupled receptor impairing toxin</keyword>
<keyword id="KW-0964">Secreted</keyword>
<keyword id="KW-0765">Sulfation</keyword>
<keyword id="KW-0800">Toxin</keyword>
<keyword id="KW-0838">Vasoactive</keyword>
<keyword id="KW-0840">Vasodilator</keyword>
<accession>Q7LZ52</accession>
<name>BRKP_PITRO</name>
<comment type="function">
    <text evidence="1">Induces relaxation of arterial smooth muscle, by targeting bradykinin receptors (BDKRB).</text>
</comment>
<comment type="subcellular location">
    <subcellularLocation>
        <location>Secreted</location>
    </subcellularLocation>
</comment>
<comment type="tissue specificity">
    <text>Expressed by the skin glands.</text>
</comment>
<comment type="similarity">
    <text evidence="3">Belongs to the bradykinin-related peptide family.</text>
</comment>
<sequence>RPPGFSPFRIY</sequence>
<organism>
    <name type="scientific">Pithecopus rohdei</name>
    <name type="common">Rohde's leaf frog</name>
    <name type="synonym">Phyllomedusa rohdei</name>
    <dbReference type="NCBI Taxonomy" id="8394"/>
    <lineage>
        <taxon>Eukaryota</taxon>
        <taxon>Metazoa</taxon>
        <taxon>Chordata</taxon>
        <taxon>Craniata</taxon>
        <taxon>Vertebrata</taxon>
        <taxon>Euteleostomi</taxon>
        <taxon>Amphibia</taxon>
        <taxon>Batrachia</taxon>
        <taxon>Anura</taxon>
        <taxon>Neobatrachia</taxon>
        <taxon>Hyloidea</taxon>
        <taxon>Hylidae</taxon>
        <taxon>Phyllomedusinae</taxon>
        <taxon>Pithecopus</taxon>
    </lineage>
</organism>
<proteinExistence type="evidence at protein level"/>
<dbReference type="PIR" id="A61365">
    <property type="entry name" value="A61365"/>
</dbReference>
<dbReference type="GO" id="GO:0005576">
    <property type="term" value="C:extracellular region"/>
    <property type="evidence" value="ECO:0007669"/>
    <property type="project" value="UniProtKB-SubCell"/>
</dbReference>
<dbReference type="GO" id="GO:0090729">
    <property type="term" value="F:toxin activity"/>
    <property type="evidence" value="ECO:0007669"/>
    <property type="project" value="UniProtKB-KW"/>
</dbReference>
<dbReference type="GO" id="GO:0006952">
    <property type="term" value="P:defense response"/>
    <property type="evidence" value="ECO:0007669"/>
    <property type="project" value="UniProtKB-KW"/>
</dbReference>
<dbReference type="GO" id="GO:0042311">
    <property type="term" value="P:vasodilation"/>
    <property type="evidence" value="ECO:0007669"/>
    <property type="project" value="UniProtKB-KW"/>
</dbReference>